<organism>
    <name type="scientific">Pseudomonas syringae pv. syringae (strain B728a)</name>
    <dbReference type="NCBI Taxonomy" id="205918"/>
    <lineage>
        <taxon>Bacteria</taxon>
        <taxon>Pseudomonadati</taxon>
        <taxon>Pseudomonadota</taxon>
        <taxon>Gammaproteobacteria</taxon>
        <taxon>Pseudomonadales</taxon>
        <taxon>Pseudomonadaceae</taxon>
        <taxon>Pseudomonas</taxon>
        <taxon>Pseudomonas syringae</taxon>
    </lineage>
</organism>
<sequence>MKKVSPSYLKHHFLIAMPHMHDENFAQTLTYIVEHNANGAMGLVINRPQSLTLADVLEQLRPELPAPRHCQDIVIHTGGPVQTDRGFVLHPSGQTFQATVNLPGGISLSTSQDVLFSIADGYGPDQNVITLGYAGWDAGQLDAEMADNAWLTCSFDPAILFDVDSDQRLEAAARRLGINLNLISTQAGHA</sequence>
<evidence type="ECO:0000255" key="1">
    <source>
        <dbReference type="HAMAP-Rule" id="MF_00758"/>
    </source>
</evidence>
<dbReference type="EMBL" id="CP000075">
    <property type="protein sequence ID" value="AAY35555.1"/>
    <property type="molecule type" value="Genomic_DNA"/>
</dbReference>
<dbReference type="RefSeq" id="WP_011266431.1">
    <property type="nucleotide sequence ID" value="NC_007005.1"/>
</dbReference>
<dbReference type="RefSeq" id="YP_233593.1">
    <property type="nucleotide sequence ID" value="NC_007005.1"/>
</dbReference>
<dbReference type="SMR" id="Q4ZZ67"/>
<dbReference type="STRING" id="205918.Psyr_0485"/>
<dbReference type="KEGG" id="psb:Psyr_0485"/>
<dbReference type="PATRIC" id="fig|205918.7.peg.504"/>
<dbReference type="eggNOG" id="COG1678">
    <property type="taxonomic scope" value="Bacteria"/>
</dbReference>
<dbReference type="HOGENOM" id="CLU_057596_1_0_6"/>
<dbReference type="OrthoDB" id="9807486at2"/>
<dbReference type="Proteomes" id="UP000000426">
    <property type="component" value="Chromosome"/>
</dbReference>
<dbReference type="GO" id="GO:0005829">
    <property type="term" value="C:cytosol"/>
    <property type="evidence" value="ECO:0007669"/>
    <property type="project" value="TreeGrafter"/>
</dbReference>
<dbReference type="Gene3D" id="3.40.1740.10">
    <property type="entry name" value="VC0467-like"/>
    <property type="match status" value="1"/>
</dbReference>
<dbReference type="HAMAP" id="MF_00758">
    <property type="entry name" value="UPF0301"/>
    <property type="match status" value="1"/>
</dbReference>
<dbReference type="InterPro" id="IPR003774">
    <property type="entry name" value="AlgH-like"/>
</dbReference>
<dbReference type="NCBIfam" id="NF001266">
    <property type="entry name" value="PRK00228.1-1"/>
    <property type="match status" value="1"/>
</dbReference>
<dbReference type="PANTHER" id="PTHR30327">
    <property type="entry name" value="UNCHARACTERIZED PROTEIN YQGE"/>
    <property type="match status" value="1"/>
</dbReference>
<dbReference type="PANTHER" id="PTHR30327:SF1">
    <property type="entry name" value="UPF0301 PROTEIN YQGE"/>
    <property type="match status" value="1"/>
</dbReference>
<dbReference type="Pfam" id="PF02622">
    <property type="entry name" value="DUF179"/>
    <property type="match status" value="1"/>
</dbReference>
<dbReference type="SUPFAM" id="SSF143456">
    <property type="entry name" value="VC0467-like"/>
    <property type="match status" value="1"/>
</dbReference>
<protein>
    <recommendedName>
        <fullName evidence="1">UPF0301 protein Psyr_0485</fullName>
    </recommendedName>
</protein>
<reference key="1">
    <citation type="journal article" date="2005" name="Proc. Natl. Acad. Sci. U.S.A.">
        <title>Comparison of the complete genome sequences of Pseudomonas syringae pv. syringae B728a and pv. tomato DC3000.</title>
        <authorList>
            <person name="Feil H."/>
            <person name="Feil W.S."/>
            <person name="Chain P."/>
            <person name="Larimer F."/>
            <person name="Dibartolo G."/>
            <person name="Copeland A."/>
            <person name="Lykidis A."/>
            <person name="Trong S."/>
            <person name="Nolan M."/>
            <person name="Goltsman E."/>
            <person name="Thiel J."/>
            <person name="Malfatti S."/>
            <person name="Loper J.E."/>
            <person name="Lapidus A."/>
            <person name="Detter J.C."/>
            <person name="Land M."/>
            <person name="Richardson P.M."/>
            <person name="Kyrpides N.C."/>
            <person name="Ivanova N."/>
            <person name="Lindow S.E."/>
        </authorList>
    </citation>
    <scope>NUCLEOTIDE SEQUENCE [LARGE SCALE GENOMIC DNA]</scope>
    <source>
        <strain>B728a</strain>
    </source>
</reference>
<gene>
    <name type="ordered locus">Psyr_0485</name>
</gene>
<comment type="similarity">
    <text evidence="1">Belongs to the UPF0301 (AlgH) family.</text>
</comment>
<feature type="chain" id="PRO_0000258859" description="UPF0301 protein Psyr_0485">
    <location>
        <begin position="1"/>
        <end position="190"/>
    </location>
</feature>
<accession>Q4ZZ67</accession>
<proteinExistence type="inferred from homology"/>
<name>Y485_PSEU2</name>